<reference key="1">
    <citation type="journal article" date="2011" name="J. Bacteriol.">
        <title>Comparative genomics of 28 Salmonella enterica isolates: evidence for CRISPR-mediated adaptive sublineage evolution.</title>
        <authorList>
            <person name="Fricke W.F."/>
            <person name="Mammel M.K."/>
            <person name="McDermott P.F."/>
            <person name="Tartera C."/>
            <person name="White D.G."/>
            <person name="Leclerc J.E."/>
            <person name="Ravel J."/>
            <person name="Cebula T.A."/>
        </authorList>
    </citation>
    <scope>NUCLEOTIDE SEQUENCE [LARGE SCALE GENOMIC DNA]</scope>
    <source>
        <strain>SL476</strain>
    </source>
</reference>
<comment type="function">
    <text evidence="1">Catalyzes the transfer of CoA to carnitine, generating the initial carnitinyl-CoA needed for the CaiB reaction cycle. Also has activity toward crotonobetaine and gamma-butyrobetaine.</text>
</comment>
<comment type="catalytic activity">
    <reaction evidence="1">
        <text>4-(trimethylamino)butanoate + ATP + CoA = 4-(trimethylamino)butanoyl-CoA + AMP + diphosphate</text>
        <dbReference type="Rhea" id="RHEA:55960"/>
        <dbReference type="ChEBI" id="CHEBI:16244"/>
        <dbReference type="ChEBI" id="CHEBI:30616"/>
        <dbReference type="ChEBI" id="CHEBI:33019"/>
        <dbReference type="ChEBI" id="CHEBI:57287"/>
        <dbReference type="ChEBI" id="CHEBI:61513"/>
        <dbReference type="ChEBI" id="CHEBI:456215"/>
        <dbReference type="EC" id="6.2.1.48"/>
    </reaction>
</comment>
<comment type="catalytic activity">
    <reaction evidence="1">
        <text>crotonobetaine + ATP + CoA = crotonobetainyl-CoA + AMP + diphosphate</text>
        <dbReference type="Rhea" id="RHEA:30079"/>
        <dbReference type="ChEBI" id="CHEBI:17237"/>
        <dbReference type="ChEBI" id="CHEBI:30616"/>
        <dbReference type="ChEBI" id="CHEBI:33019"/>
        <dbReference type="ChEBI" id="CHEBI:57287"/>
        <dbReference type="ChEBI" id="CHEBI:60933"/>
        <dbReference type="ChEBI" id="CHEBI:456215"/>
        <dbReference type="EC" id="6.2.1.48"/>
    </reaction>
</comment>
<comment type="catalytic activity">
    <reaction evidence="1">
        <text>(R)-carnitine + ATP + CoA = (R)-carnitinyl-CoA + AMP + diphosphate</text>
        <dbReference type="Rhea" id="RHEA:28514"/>
        <dbReference type="ChEBI" id="CHEBI:16347"/>
        <dbReference type="ChEBI" id="CHEBI:30616"/>
        <dbReference type="ChEBI" id="CHEBI:33019"/>
        <dbReference type="ChEBI" id="CHEBI:57287"/>
        <dbReference type="ChEBI" id="CHEBI:60932"/>
        <dbReference type="ChEBI" id="CHEBI:456215"/>
        <dbReference type="EC" id="6.2.1.48"/>
    </reaction>
</comment>
<comment type="pathway">
    <text evidence="1">Amine and polyamine metabolism; carnitine metabolism.</text>
</comment>
<comment type="similarity">
    <text evidence="1">Belongs to the ATP-dependent AMP-binding enzyme family.</text>
</comment>
<gene>
    <name evidence="1" type="primary">caiC</name>
    <name type="ordered locus">SeHA_C0075</name>
</gene>
<proteinExistence type="inferred from homology"/>
<dbReference type="EC" id="6.2.1.48" evidence="1"/>
<dbReference type="EMBL" id="CP001120">
    <property type="protein sequence ID" value="ACF69449.1"/>
    <property type="molecule type" value="Genomic_DNA"/>
</dbReference>
<dbReference type="RefSeq" id="WP_000355806.1">
    <property type="nucleotide sequence ID" value="NC_011083.1"/>
</dbReference>
<dbReference type="SMR" id="B4TIH0"/>
<dbReference type="KEGG" id="seh:SeHA_C0075"/>
<dbReference type="HOGENOM" id="CLU_000022_59_0_6"/>
<dbReference type="UniPathway" id="UPA00117"/>
<dbReference type="Proteomes" id="UP000001866">
    <property type="component" value="Chromosome"/>
</dbReference>
<dbReference type="GO" id="GO:0051108">
    <property type="term" value="F:carnitine-CoA ligase activity"/>
    <property type="evidence" value="ECO:0007669"/>
    <property type="project" value="InterPro"/>
</dbReference>
<dbReference type="GO" id="GO:0051109">
    <property type="term" value="F:crotonobetaine-CoA ligase activity"/>
    <property type="evidence" value="ECO:0007669"/>
    <property type="project" value="InterPro"/>
</dbReference>
<dbReference type="GO" id="GO:0031956">
    <property type="term" value="F:medium-chain fatty acid-CoA ligase activity"/>
    <property type="evidence" value="ECO:0007669"/>
    <property type="project" value="TreeGrafter"/>
</dbReference>
<dbReference type="GO" id="GO:0009437">
    <property type="term" value="P:carnitine metabolic process"/>
    <property type="evidence" value="ECO:0007669"/>
    <property type="project" value="UniProtKB-UniRule"/>
</dbReference>
<dbReference type="GO" id="GO:0006631">
    <property type="term" value="P:fatty acid metabolic process"/>
    <property type="evidence" value="ECO:0007669"/>
    <property type="project" value="TreeGrafter"/>
</dbReference>
<dbReference type="CDD" id="cd05934">
    <property type="entry name" value="FACL_DitJ_like"/>
    <property type="match status" value="1"/>
</dbReference>
<dbReference type="FunFam" id="3.30.300.30:FF:000011">
    <property type="entry name" value="Crotonobetaine/carnitine--CoA ligase"/>
    <property type="match status" value="1"/>
</dbReference>
<dbReference type="Gene3D" id="3.30.300.30">
    <property type="match status" value="1"/>
</dbReference>
<dbReference type="Gene3D" id="3.40.50.12780">
    <property type="entry name" value="N-terminal domain of ligase-like"/>
    <property type="match status" value="1"/>
</dbReference>
<dbReference type="HAMAP" id="MF_01524">
    <property type="entry name" value="CaiC"/>
    <property type="match status" value="1"/>
</dbReference>
<dbReference type="InterPro" id="IPR025110">
    <property type="entry name" value="AMP-bd_C"/>
</dbReference>
<dbReference type="InterPro" id="IPR045851">
    <property type="entry name" value="AMP-bd_C_sf"/>
</dbReference>
<dbReference type="InterPro" id="IPR020845">
    <property type="entry name" value="AMP-binding_CS"/>
</dbReference>
<dbReference type="InterPro" id="IPR000873">
    <property type="entry name" value="AMP-dep_synth/lig_dom"/>
</dbReference>
<dbReference type="InterPro" id="IPR042099">
    <property type="entry name" value="ANL_N_sf"/>
</dbReference>
<dbReference type="InterPro" id="IPR023456">
    <property type="entry name" value="CaiC"/>
</dbReference>
<dbReference type="NCBIfam" id="NF005947">
    <property type="entry name" value="PRK08008.1"/>
    <property type="match status" value="1"/>
</dbReference>
<dbReference type="PANTHER" id="PTHR43201">
    <property type="entry name" value="ACYL-COA SYNTHETASE"/>
    <property type="match status" value="1"/>
</dbReference>
<dbReference type="PANTHER" id="PTHR43201:SF5">
    <property type="entry name" value="MEDIUM-CHAIN ACYL-COA LIGASE ACSF2, MITOCHONDRIAL"/>
    <property type="match status" value="1"/>
</dbReference>
<dbReference type="Pfam" id="PF00501">
    <property type="entry name" value="AMP-binding"/>
    <property type="match status" value="1"/>
</dbReference>
<dbReference type="Pfam" id="PF13193">
    <property type="entry name" value="AMP-binding_C"/>
    <property type="match status" value="1"/>
</dbReference>
<dbReference type="SUPFAM" id="SSF56801">
    <property type="entry name" value="Acetyl-CoA synthetase-like"/>
    <property type="match status" value="1"/>
</dbReference>
<dbReference type="PROSITE" id="PS00455">
    <property type="entry name" value="AMP_BINDING"/>
    <property type="match status" value="1"/>
</dbReference>
<evidence type="ECO:0000255" key="1">
    <source>
        <dbReference type="HAMAP-Rule" id="MF_01524"/>
    </source>
</evidence>
<protein>
    <recommendedName>
        <fullName evidence="1">Crotonobetaine/carnitine--CoA ligase</fullName>
        <ecNumber evidence="1">6.2.1.48</ecNumber>
    </recommendedName>
</protein>
<organism>
    <name type="scientific">Salmonella heidelberg (strain SL476)</name>
    <dbReference type="NCBI Taxonomy" id="454169"/>
    <lineage>
        <taxon>Bacteria</taxon>
        <taxon>Pseudomonadati</taxon>
        <taxon>Pseudomonadota</taxon>
        <taxon>Gammaproteobacteria</taxon>
        <taxon>Enterobacterales</taxon>
        <taxon>Enterobacteriaceae</taxon>
        <taxon>Salmonella</taxon>
    </lineage>
</organism>
<name>CAIC_SALHS</name>
<accession>B4TIH0</accession>
<keyword id="KW-0436">Ligase</keyword>
<sequence length="517" mass="58488">MDIVGGQNLRQMWDDLAGVYGDKTALIFESCEGIVRQFSYASLNEEINRTANLFYSLGIRKGDRVALHLDNCPEFIFCWFGLAKIGAIMVPINARLLGEESAWILQNSQVSLLVTSAQFYPMYREIRQDNSTPLNHICLIGEQLPADDGVSHFTQLQARQSATLCYTPVLSTDDTAEILFTSGTTSRPKGVVITHYNLRFAGYYSAWQIALRDDDVYMTVMPAFHIDCQCTAAMPAFSAGSTFVLLEKYSARAFWDQVRKYQATVTECIPMMIRTLMVQPAAPTDRQHHLREVMFYLNLSEQEKDDFTERFGVRLLTSYGMTETIVGIIGDRPGDKRRWPSIGRVGFSYEAEIRDDQNRPLPAGEIGEICIKGIPGKTIFKEYYMQPEATAKALEPEGWLHTGDSGYQDEDGYFYFVDRRCNMIKRGGENVSCVELENIISAHPKIQDIVVVGIKDAIRDEAIKAFIVLNEGETLSEAEFFSFCENNMAKFKVPSFMEIRTDLPRNCSGKIIKKNLK</sequence>
<feature type="chain" id="PRO_1000200918" description="Crotonobetaine/carnitine--CoA ligase">
    <location>
        <begin position="1"/>
        <end position="517"/>
    </location>
</feature>